<sequence length="248" mass="26597">MILFPAIDLKDGQCVRLKLGDMEQATVYNSDPAAQARAFEEQGFEWLHVVDLNGAFAGETVNGDAVDAILRATKNPVQLGGGIRTLDHIENWLARGLKRVILGTVAVRDPALVIEACRKFPGRIAVGIDAKGGKVAVEGWAEASELGVIELARRFEGAGVAAIIYTDIDRDGILTGINWAATLELSDAVSIPVIASGGLASLDDIRRMTEPEAQKLEGAISGRALYDGRIDPKEALDLIREARKGMIR</sequence>
<dbReference type="EC" id="5.3.1.16" evidence="1"/>
<dbReference type="EMBL" id="CP000738">
    <property type="protein sequence ID" value="ABR62084.1"/>
    <property type="molecule type" value="Genomic_DNA"/>
</dbReference>
<dbReference type="RefSeq" id="WP_012067465.1">
    <property type="nucleotide sequence ID" value="NC_009636.1"/>
</dbReference>
<dbReference type="RefSeq" id="YP_001328919.1">
    <property type="nucleotide sequence ID" value="NC_009636.1"/>
</dbReference>
<dbReference type="SMR" id="A6UEK4"/>
<dbReference type="STRING" id="366394.Smed_3260"/>
<dbReference type="GeneID" id="61610842"/>
<dbReference type="KEGG" id="smd:Smed_3260"/>
<dbReference type="PATRIC" id="fig|366394.8.peg.6500"/>
<dbReference type="eggNOG" id="COG0106">
    <property type="taxonomic scope" value="Bacteria"/>
</dbReference>
<dbReference type="HOGENOM" id="CLU_048577_1_1_5"/>
<dbReference type="OrthoDB" id="9807749at2"/>
<dbReference type="UniPathway" id="UPA00031">
    <property type="reaction ID" value="UER00009"/>
</dbReference>
<dbReference type="Proteomes" id="UP000001108">
    <property type="component" value="Chromosome"/>
</dbReference>
<dbReference type="GO" id="GO:0005737">
    <property type="term" value="C:cytoplasm"/>
    <property type="evidence" value="ECO:0007669"/>
    <property type="project" value="UniProtKB-SubCell"/>
</dbReference>
<dbReference type="GO" id="GO:0003949">
    <property type="term" value="F:1-(5-phosphoribosyl)-5-[(5-phosphoribosylamino)methylideneamino]imidazole-4-carboxamide isomerase activity"/>
    <property type="evidence" value="ECO:0007669"/>
    <property type="project" value="UniProtKB-UniRule"/>
</dbReference>
<dbReference type="GO" id="GO:0000105">
    <property type="term" value="P:L-histidine biosynthetic process"/>
    <property type="evidence" value="ECO:0007669"/>
    <property type="project" value="UniProtKB-UniRule"/>
</dbReference>
<dbReference type="GO" id="GO:0000162">
    <property type="term" value="P:L-tryptophan biosynthetic process"/>
    <property type="evidence" value="ECO:0007669"/>
    <property type="project" value="TreeGrafter"/>
</dbReference>
<dbReference type="CDD" id="cd04732">
    <property type="entry name" value="HisA"/>
    <property type="match status" value="1"/>
</dbReference>
<dbReference type="FunFam" id="3.20.20.70:FF:000009">
    <property type="entry name" value="1-(5-phosphoribosyl)-5-[(5-phosphoribosylamino)methylideneamino] imidazole-4-carboxamide isomerase"/>
    <property type="match status" value="1"/>
</dbReference>
<dbReference type="Gene3D" id="3.20.20.70">
    <property type="entry name" value="Aldolase class I"/>
    <property type="match status" value="1"/>
</dbReference>
<dbReference type="HAMAP" id="MF_01014">
    <property type="entry name" value="HisA"/>
    <property type="match status" value="1"/>
</dbReference>
<dbReference type="InterPro" id="IPR013785">
    <property type="entry name" value="Aldolase_TIM"/>
</dbReference>
<dbReference type="InterPro" id="IPR006062">
    <property type="entry name" value="His_biosynth"/>
</dbReference>
<dbReference type="InterPro" id="IPR006063">
    <property type="entry name" value="HisA_bact_arch"/>
</dbReference>
<dbReference type="InterPro" id="IPR044524">
    <property type="entry name" value="Isoase_HisA-like"/>
</dbReference>
<dbReference type="InterPro" id="IPR023016">
    <property type="entry name" value="Isoase_HisA-like_bact"/>
</dbReference>
<dbReference type="InterPro" id="IPR011060">
    <property type="entry name" value="RibuloseP-bd_barrel"/>
</dbReference>
<dbReference type="NCBIfam" id="TIGR00007">
    <property type="entry name" value="1-(5-phosphoribosyl)-5-[(5-phosphoribosylamino)methylideneamino]imidazole-4-carboxamide isomerase"/>
    <property type="match status" value="1"/>
</dbReference>
<dbReference type="PANTHER" id="PTHR43090">
    <property type="entry name" value="1-(5-PHOSPHORIBOSYL)-5-[(5-PHOSPHORIBOSYLAMINO)METHYLIDENEAMINO] IMIDAZOLE-4-CARBOXAMIDE ISOMERASE"/>
    <property type="match status" value="1"/>
</dbReference>
<dbReference type="PANTHER" id="PTHR43090:SF2">
    <property type="entry name" value="1-(5-PHOSPHORIBOSYL)-5-[(5-PHOSPHORIBOSYLAMINO)METHYLIDENEAMINO] IMIDAZOLE-4-CARBOXAMIDE ISOMERASE"/>
    <property type="match status" value="1"/>
</dbReference>
<dbReference type="Pfam" id="PF00977">
    <property type="entry name" value="His_biosynth"/>
    <property type="match status" value="1"/>
</dbReference>
<dbReference type="SUPFAM" id="SSF51366">
    <property type="entry name" value="Ribulose-phoshate binding barrel"/>
    <property type="match status" value="1"/>
</dbReference>
<name>HIS4_SINMW</name>
<accession>A6UEK4</accession>
<feature type="chain" id="PRO_1000063234" description="1-(5-phosphoribosyl)-5-[(5-phosphoribosylamino)methylideneamino] imidazole-4-carboxamide isomerase">
    <location>
        <begin position="1"/>
        <end position="248"/>
    </location>
</feature>
<feature type="active site" description="Proton acceptor" evidence="1">
    <location>
        <position position="8"/>
    </location>
</feature>
<feature type="active site" description="Proton donor" evidence="1">
    <location>
        <position position="129"/>
    </location>
</feature>
<comment type="catalytic activity">
    <reaction evidence="1">
        <text>1-(5-phospho-beta-D-ribosyl)-5-[(5-phospho-beta-D-ribosylamino)methylideneamino]imidazole-4-carboxamide = 5-[(5-phospho-1-deoxy-D-ribulos-1-ylimino)methylamino]-1-(5-phospho-beta-D-ribosyl)imidazole-4-carboxamide</text>
        <dbReference type="Rhea" id="RHEA:15469"/>
        <dbReference type="ChEBI" id="CHEBI:58435"/>
        <dbReference type="ChEBI" id="CHEBI:58525"/>
        <dbReference type="EC" id="5.3.1.16"/>
    </reaction>
</comment>
<comment type="pathway">
    <text evidence="1">Amino-acid biosynthesis; L-histidine biosynthesis; L-histidine from 5-phospho-alpha-D-ribose 1-diphosphate: step 4/9.</text>
</comment>
<comment type="subcellular location">
    <subcellularLocation>
        <location evidence="1">Cytoplasm</location>
    </subcellularLocation>
</comment>
<comment type="similarity">
    <text evidence="1">Belongs to the HisA/HisF family.</text>
</comment>
<gene>
    <name evidence="1" type="primary">hisA</name>
    <name type="ordered locus">Smed_3260</name>
</gene>
<keyword id="KW-0028">Amino-acid biosynthesis</keyword>
<keyword id="KW-0963">Cytoplasm</keyword>
<keyword id="KW-0368">Histidine biosynthesis</keyword>
<keyword id="KW-0413">Isomerase</keyword>
<protein>
    <recommendedName>
        <fullName evidence="1">1-(5-phosphoribosyl)-5-[(5-phosphoribosylamino)methylideneamino] imidazole-4-carboxamide isomerase</fullName>
        <ecNumber evidence="1">5.3.1.16</ecNumber>
    </recommendedName>
    <alternativeName>
        <fullName evidence="1">Phosphoribosylformimino-5-aminoimidazole carboxamide ribotide isomerase</fullName>
    </alternativeName>
</protein>
<reference key="1">
    <citation type="submission" date="2007-06" db="EMBL/GenBank/DDBJ databases">
        <title>Complete sequence of Sinorhizobium medicae WSM419 chromosome.</title>
        <authorList>
            <consortium name="US DOE Joint Genome Institute"/>
            <person name="Copeland A."/>
            <person name="Lucas S."/>
            <person name="Lapidus A."/>
            <person name="Barry K."/>
            <person name="Glavina del Rio T."/>
            <person name="Dalin E."/>
            <person name="Tice H."/>
            <person name="Pitluck S."/>
            <person name="Chain P."/>
            <person name="Malfatti S."/>
            <person name="Shin M."/>
            <person name="Vergez L."/>
            <person name="Schmutz J."/>
            <person name="Larimer F."/>
            <person name="Land M."/>
            <person name="Hauser L."/>
            <person name="Kyrpides N."/>
            <person name="Mikhailova N."/>
            <person name="Reeve W.G."/>
            <person name="Richardson P."/>
        </authorList>
    </citation>
    <scope>NUCLEOTIDE SEQUENCE [LARGE SCALE GENOMIC DNA]</scope>
    <source>
        <strain>WSM419</strain>
    </source>
</reference>
<proteinExistence type="inferred from homology"/>
<organism>
    <name type="scientific">Sinorhizobium medicae (strain WSM419)</name>
    <name type="common">Ensifer medicae</name>
    <dbReference type="NCBI Taxonomy" id="366394"/>
    <lineage>
        <taxon>Bacteria</taxon>
        <taxon>Pseudomonadati</taxon>
        <taxon>Pseudomonadota</taxon>
        <taxon>Alphaproteobacteria</taxon>
        <taxon>Hyphomicrobiales</taxon>
        <taxon>Rhizobiaceae</taxon>
        <taxon>Sinorhizobium/Ensifer group</taxon>
        <taxon>Sinorhizobium</taxon>
    </lineage>
</organism>
<evidence type="ECO:0000255" key="1">
    <source>
        <dbReference type="HAMAP-Rule" id="MF_01014"/>
    </source>
</evidence>